<feature type="chain" id="PRO_1000143935" description="Large ribosomal subunit protein uL6">
    <location>
        <begin position="1"/>
        <end position="174"/>
    </location>
</feature>
<comment type="function">
    <text evidence="1">This protein binds to the 23S rRNA, and is important in its secondary structure. It is located near the subunit interface in the base of the L7/L12 stalk, and near the tRNA binding site of the peptidyltransferase center.</text>
</comment>
<comment type="subunit">
    <text evidence="1">Part of the 50S ribosomal subunit.</text>
</comment>
<comment type="similarity">
    <text evidence="1">Belongs to the universal ribosomal protein uL6 family.</text>
</comment>
<dbReference type="EMBL" id="CP001132">
    <property type="protein sequence ID" value="ACH82766.1"/>
    <property type="molecule type" value="Genomic_DNA"/>
</dbReference>
<dbReference type="RefSeq" id="WP_012536092.1">
    <property type="nucleotide sequence ID" value="NC_011206.1"/>
</dbReference>
<dbReference type="SMR" id="B5ELZ4"/>
<dbReference type="GeneID" id="65279720"/>
<dbReference type="KEGG" id="afe:Lferr_0512"/>
<dbReference type="eggNOG" id="COG0097">
    <property type="taxonomic scope" value="Bacteria"/>
</dbReference>
<dbReference type="HOGENOM" id="CLU_065464_1_2_6"/>
<dbReference type="GO" id="GO:0022625">
    <property type="term" value="C:cytosolic large ribosomal subunit"/>
    <property type="evidence" value="ECO:0007669"/>
    <property type="project" value="TreeGrafter"/>
</dbReference>
<dbReference type="GO" id="GO:0019843">
    <property type="term" value="F:rRNA binding"/>
    <property type="evidence" value="ECO:0007669"/>
    <property type="project" value="UniProtKB-UniRule"/>
</dbReference>
<dbReference type="GO" id="GO:0003735">
    <property type="term" value="F:structural constituent of ribosome"/>
    <property type="evidence" value="ECO:0007669"/>
    <property type="project" value="InterPro"/>
</dbReference>
<dbReference type="GO" id="GO:0002181">
    <property type="term" value="P:cytoplasmic translation"/>
    <property type="evidence" value="ECO:0007669"/>
    <property type="project" value="TreeGrafter"/>
</dbReference>
<dbReference type="FunFam" id="3.90.930.12:FF:000001">
    <property type="entry name" value="50S ribosomal protein L6"/>
    <property type="match status" value="1"/>
</dbReference>
<dbReference type="Gene3D" id="3.90.930.12">
    <property type="entry name" value="Ribosomal protein L6, alpha-beta domain"/>
    <property type="match status" value="2"/>
</dbReference>
<dbReference type="HAMAP" id="MF_01365_B">
    <property type="entry name" value="Ribosomal_uL6_B"/>
    <property type="match status" value="1"/>
</dbReference>
<dbReference type="InterPro" id="IPR000702">
    <property type="entry name" value="Ribosomal_uL6-like"/>
</dbReference>
<dbReference type="InterPro" id="IPR036789">
    <property type="entry name" value="Ribosomal_uL6-like_a/b-dom_sf"/>
</dbReference>
<dbReference type="InterPro" id="IPR020040">
    <property type="entry name" value="Ribosomal_uL6_a/b-dom"/>
</dbReference>
<dbReference type="InterPro" id="IPR019906">
    <property type="entry name" value="Ribosomal_uL6_bac-type"/>
</dbReference>
<dbReference type="InterPro" id="IPR002358">
    <property type="entry name" value="Ribosomal_uL6_CS"/>
</dbReference>
<dbReference type="NCBIfam" id="TIGR03654">
    <property type="entry name" value="L6_bact"/>
    <property type="match status" value="1"/>
</dbReference>
<dbReference type="PANTHER" id="PTHR11655">
    <property type="entry name" value="60S/50S RIBOSOMAL PROTEIN L6/L9"/>
    <property type="match status" value="1"/>
</dbReference>
<dbReference type="PANTHER" id="PTHR11655:SF14">
    <property type="entry name" value="LARGE RIBOSOMAL SUBUNIT PROTEIN UL6M"/>
    <property type="match status" value="1"/>
</dbReference>
<dbReference type="Pfam" id="PF00347">
    <property type="entry name" value="Ribosomal_L6"/>
    <property type="match status" value="2"/>
</dbReference>
<dbReference type="PIRSF" id="PIRSF002162">
    <property type="entry name" value="Ribosomal_L6"/>
    <property type="match status" value="1"/>
</dbReference>
<dbReference type="PRINTS" id="PR00059">
    <property type="entry name" value="RIBOSOMALL6"/>
</dbReference>
<dbReference type="SUPFAM" id="SSF56053">
    <property type="entry name" value="Ribosomal protein L6"/>
    <property type="match status" value="2"/>
</dbReference>
<dbReference type="PROSITE" id="PS00525">
    <property type="entry name" value="RIBOSOMAL_L6_1"/>
    <property type="match status" value="1"/>
</dbReference>
<sequence>MSRVAKQPVPLPKGVEVHVADQRLVVKGPKGEMSVPFHPAVELRIDDGGASLTWSDNQNAQAGTMRAILNNMVQGVSQGYEQKLEIIGVGYRAQAKGKTLSLSLGFSHPVDYSVPDDITIETPTQTEIVIRGIDKQKIGQIAADIRAYRPPEPYKGKGVRYAGENVRRKEAKKK</sequence>
<organism>
    <name type="scientific">Acidithiobacillus ferrooxidans (strain ATCC 53993 / BNL-5-31)</name>
    <name type="common">Leptospirillum ferrooxidans (ATCC 53993)</name>
    <dbReference type="NCBI Taxonomy" id="380394"/>
    <lineage>
        <taxon>Bacteria</taxon>
        <taxon>Pseudomonadati</taxon>
        <taxon>Pseudomonadota</taxon>
        <taxon>Acidithiobacillia</taxon>
        <taxon>Acidithiobacillales</taxon>
        <taxon>Acidithiobacillaceae</taxon>
        <taxon>Acidithiobacillus</taxon>
    </lineage>
</organism>
<evidence type="ECO:0000255" key="1">
    <source>
        <dbReference type="HAMAP-Rule" id="MF_01365"/>
    </source>
</evidence>
<evidence type="ECO:0000305" key="2"/>
<keyword id="KW-0687">Ribonucleoprotein</keyword>
<keyword id="KW-0689">Ribosomal protein</keyword>
<keyword id="KW-0694">RNA-binding</keyword>
<keyword id="KW-0699">rRNA-binding</keyword>
<proteinExistence type="inferred from homology"/>
<name>RL6_ACIF5</name>
<protein>
    <recommendedName>
        <fullName evidence="1">Large ribosomal subunit protein uL6</fullName>
    </recommendedName>
    <alternativeName>
        <fullName evidence="2">50S ribosomal protein L6</fullName>
    </alternativeName>
</protein>
<accession>B5ELZ4</accession>
<reference key="1">
    <citation type="submission" date="2008-08" db="EMBL/GenBank/DDBJ databases">
        <title>Complete sequence of Acidithiobacillus ferrooxidans ATCC 53993.</title>
        <authorList>
            <person name="Lucas S."/>
            <person name="Copeland A."/>
            <person name="Lapidus A."/>
            <person name="Glavina del Rio T."/>
            <person name="Dalin E."/>
            <person name="Tice H."/>
            <person name="Bruce D."/>
            <person name="Goodwin L."/>
            <person name="Pitluck S."/>
            <person name="Sims D."/>
            <person name="Brettin T."/>
            <person name="Detter J.C."/>
            <person name="Han C."/>
            <person name="Kuske C.R."/>
            <person name="Larimer F."/>
            <person name="Land M."/>
            <person name="Hauser L."/>
            <person name="Kyrpides N."/>
            <person name="Lykidis A."/>
            <person name="Borole A.P."/>
        </authorList>
    </citation>
    <scope>NUCLEOTIDE SEQUENCE [LARGE SCALE GENOMIC DNA]</scope>
    <source>
        <strain>ATCC 53993 / BNL-5-31</strain>
    </source>
</reference>
<gene>
    <name evidence="1" type="primary">rplF</name>
    <name type="ordered locus">Lferr_0512</name>
</gene>